<proteinExistence type="evidence at transcript level"/>
<name>BAP1_BOVIN</name>
<organism>
    <name type="scientific">Bos taurus</name>
    <name type="common">Bovine</name>
    <dbReference type="NCBI Taxonomy" id="9913"/>
    <lineage>
        <taxon>Eukaryota</taxon>
        <taxon>Metazoa</taxon>
        <taxon>Chordata</taxon>
        <taxon>Craniata</taxon>
        <taxon>Vertebrata</taxon>
        <taxon>Euteleostomi</taxon>
        <taxon>Mammalia</taxon>
        <taxon>Eutheria</taxon>
        <taxon>Laurasiatheria</taxon>
        <taxon>Artiodactyla</taxon>
        <taxon>Ruminantia</taxon>
        <taxon>Pecora</taxon>
        <taxon>Bovidae</taxon>
        <taxon>Bovinae</taxon>
        <taxon>Bos</taxon>
    </lineage>
</organism>
<accession>A2VDM8</accession>
<evidence type="ECO:0000250" key="1">
    <source>
        <dbReference type="UniProtKB" id="Q92560"/>
    </source>
</evidence>
<evidence type="ECO:0000250" key="2">
    <source>
        <dbReference type="UniProtKB" id="Q99PU7"/>
    </source>
</evidence>
<evidence type="ECO:0000255" key="3"/>
<evidence type="ECO:0000255" key="4">
    <source>
        <dbReference type="PROSITE-ProRule" id="PRU01393"/>
    </source>
</evidence>
<evidence type="ECO:0000255" key="5">
    <source>
        <dbReference type="PROSITE-ProRule" id="PRU01394"/>
    </source>
</evidence>
<evidence type="ECO:0000256" key="6">
    <source>
        <dbReference type="SAM" id="MobiDB-lite"/>
    </source>
</evidence>
<evidence type="ECO:0000305" key="7"/>
<reference key="1">
    <citation type="submission" date="2007-02" db="EMBL/GenBank/DDBJ databases">
        <authorList>
            <consortium name="NIH - Mammalian Gene Collection (MGC) project"/>
        </authorList>
    </citation>
    <scope>NUCLEOTIDE SEQUENCE [LARGE SCALE MRNA]</scope>
    <source>
        <strain>Hereford</strain>
        <tissue>Basal ganglia</tissue>
    </source>
</reference>
<sequence length="711" mass="78333">MNKGWLELESDPGLFTLLVEDFGVKGVQVEEIYDLQSKCQGPVYGFIFLFKWIEERRSRRKVSTLVDDTSVIDDDIVNNMFFAHQLIPNSCATHALLSVLLNCSNVDLGPTLSRMKDFTKGFSPESKGYAIGNAPELAKAHNSHARPEPRHLPEKQNGLSAVRTMEAFHFVSYVPITGRLFELDGLKVYPIDHGPWGEDEEWTDKARRVIMERIGLATAGIKYEARLHVLKVNRQTVLEALQQLIRVTQPELIQTHKSQESQLPEESKPASSKSPLALETSRAPVASESTHTDGVEEVAGSCPQAPTHSPPSKPKLVVKPPGSNINGVPPNPTPIVQRLPAFLDNHNYAKSPMQEEEDLAAGVGRSRVPVRPPQQYSDDEDDYEDEEEDDAQSTSSAIRYKRKGPGKPGPLSSSGDGQLSVLQPNTINVLAEKLKESQKDLSIPLSIKTSSGAGSPAVAVPTHSQPSPTPSNESTDTASEIGSAFNSPLRSPIRSANPTRPSSPVTSHISKVLFGEDDSLLRVDCIRYNRAVRDLGPVISTGLLHLAEDGVLSPLALTESGKGSSPSIRPSQGSQGSGSPEEKEVVEAVDSREKPGLVRPSESLNGEKYSPKELLALLKCVEAEIANYEACLKEEVEKRKKFKIDDQRRTHNYDEFICTFISMLAQEGMLANLVEQNISVRRRQGVSIGRLHKQRKPDRRKRSRPYKAKRQ</sequence>
<protein>
    <recommendedName>
        <fullName>Ubiquitin carboxyl-terminal hydrolase BAP1</fullName>
        <ecNumber evidence="1">3.4.19.12</ecNumber>
    </recommendedName>
    <alternativeName>
        <fullName>BRCA1-associated protein 1</fullName>
    </alternativeName>
</protein>
<keyword id="KW-0156">Chromatin regulator</keyword>
<keyword id="KW-0158">Chromosome</keyword>
<keyword id="KW-0175">Coiled coil</keyword>
<keyword id="KW-0963">Cytoplasm</keyword>
<keyword id="KW-0217">Developmental protein</keyword>
<keyword id="KW-0221">Differentiation</keyword>
<keyword id="KW-0378">Hydrolase</keyword>
<keyword id="KW-0539">Nucleus</keyword>
<keyword id="KW-0597">Phosphoprotein</keyword>
<keyword id="KW-0645">Protease</keyword>
<keyword id="KW-1185">Reference proteome</keyword>
<keyword id="KW-0788">Thiol protease</keyword>
<keyword id="KW-0832">Ubl conjugation</keyword>
<keyword id="KW-0833">Ubl conjugation pathway</keyword>
<dbReference type="EC" id="3.4.19.12" evidence="1"/>
<dbReference type="EMBL" id="BC133317">
    <property type="protein sequence ID" value="AAI33318.1"/>
    <property type="molecule type" value="mRNA"/>
</dbReference>
<dbReference type="RefSeq" id="NP_001096019.1">
    <property type="nucleotide sequence ID" value="NM_001102549.1"/>
</dbReference>
<dbReference type="SMR" id="A2VDM8"/>
<dbReference type="FunCoup" id="A2VDM8">
    <property type="interactions" value="2509"/>
</dbReference>
<dbReference type="STRING" id="9913.ENSBTAP00000054730"/>
<dbReference type="MEROPS" id="C12.004"/>
<dbReference type="PaxDb" id="9913-ENSBTAP00000054730"/>
<dbReference type="GeneID" id="100124510"/>
<dbReference type="KEGG" id="bta:100124510"/>
<dbReference type="CTD" id="8314"/>
<dbReference type="eggNOG" id="KOG2778">
    <property type="taxonomic scope" value="Eukaryota"/>
</dbReference>
<dbReference type="InParanoid" id="A2VDM8"/>
<dbReference type="OrthoDB" id="1924260at2759"/>
<dbReference type="Proteomes" id="UP000009136">
    <property type="component" value="Unplaced"/>
</dbReference>
<dbReference type="GO" id="GO:0005694">
    <property type="term" value="C:chromosome"/>
    <property type="evidence" value="ECO:0007669"/>
    <property type="project" value="UniProtKB-SubCell"/>
</dbReference>
<dbReference type="GO" id="GO:0005737">
    <property type="term" value="C:cytoplasm"/>
    <property type="evidence" value="ECO:0000250"/>
    <property type="project" value="UniProtKB"/>
</dbReference>
<dbReference type="GO" id="GO:0005634">
    <property type="term" value="C:nucleus"/>
    <property type="evidence" value="ECO:0000250"/>
    <property type="project" value="UniProtKB"/>
</dbReference>
<dbReference type="GO" id="GO:0035517">
    <property type="term" value="C:PR-DUB complex"/>
    <property type="evidence" value="ECO:0000250"/>
    <property type="project" value="UniProtKB"/>
</dbReference>
<dbReference type="GO" id="GO:0003682">
    <property type="term" value="F:chromatin binding"/>
    <property type="evidence" value="ECO:0000250"/>
    <property type="project" value="UniProtKB"/>
</dbReference>
<dbReference type="GO" id="GO:0004843">
    <property type="term" value="F:cysteine-type deubiquitinase activity"/>
    <property type="evidence" value="ECO:0000250"/>
    <property type="project" value="UniProtKB"/>
</dbReference>
<dbReference type="GO" id="GO:0030154">
    <property type="term" value="P:cell differentiation"/>
    <property type="evidence" value="ECO:0007669"/>
    <property type="project" value="UniProtKB-KW"/>
</dbReference>
<dbReference type="GO" id="GO:0031507">
    <property type="term" value="P:heterochromatin formation"/>
    <property type="evidence" value="ECO:0000318"/>
    <property type="project" value="GO_Central"/>
</dbReference>
<dbReference type="GO" id="GO:0035520">
    <property type="term" value="P:monoubiquitinated protein deubiquitination"/>
    <property type="evidence" value="ECO:0000250"/>
    <property type="project" value="UniProtKB"/>
</dbReference>
<dbReference type="GO" id="GO:0045892">
    <property type="term" value="P:negative regulation of DNA-templated transcription"/>
    <property type="evidence" value="ECO:0000250"/>
    <property type="project" value="UniProtKB"/>
</dbReference>
<dbReference type="GO" id="GO:0016579">
    <property type="term" value="P:protein deubiquitination"/>
    <property type="evidence" value="ECO:0000250"/>
    <property type="project" value="UniProtKB"/>
</dbReference>
<dbReference type="GO" id="GO:0071108">
    <property type="term" value="P:protein K48-linked deubiquitination"/>
    <property type="evidence" value="ECO:0000250"/>
    <property type="project" value="UniProtKB"/>
</dbReference>
<dbReference type="GO" id="GO:0051726">
    <property type="term" value="P:regulation of cell cycle"/>
    <property type="evidence" value="ECO:0000250"/>
    <property type="project" value="UniProtKB"/>
</dbReference>
<dbReference type="GO" id="GO:0001558">
    <property type="term" value="P:regulation of cell growth"/>
    <property type="evidence" value="ECO:0000250"/>
    <property type="project" value="UniProtKB"/>
</dbReference>
<dbReference type="GO" id="GO:0006511">
    <property type="term" value="P:ubiquitin-dependent protein catabolic process"/>
    <property type="evidence" value="ECO:0007669"/>
    <property type="project" value="InterPro"/>
</dbReference>
<dbReference type="CDD" id="cd09617">
    <property type="entry name" value="Peptidase_C12_UCH37_BAP1"/>
    <property type="match status" value="1"/>
</dbReference>
<dbReference type="FunFam" id="1.20.58.860:FF:000002">
    <property type="entry name" value="Ubiquitin carboxyl-terminal hydrolase"/>
    <property type="match status" value="1"/>
</dbReference>
<dbReference type="FunFam" id="3.40.532.10:FF:000002">
    <property type="entry name" value="Ubiquitin carboxyl-terminal hydrolase"/>
    <property type="match status" value="1"/>
</dbReference>
<dbReference type="Gene3D" id="1.20.58.860">
    <property type="match status" value="1"/>
</dbReference>
<dbReference type="Gene3D" id="3.40.532.10">
    <property type="entry name" value="Peptidase C12, ubiquitin carboxyl-terminal hydrolase"/>
    <property type="match status" value="1"/>
</dbReference>
<dbReference type="InterPro" id="IPR038765">
    <property type="entry name" value="Papain-like_cys_pep_sf"/>
</dbReference>
<dbReference type="InterPro" id="IPR001578">
    <property type="entry name" value="Peptidase_C12_UCH"/>
</dbReference>
<dbReference type="InterPro" id="IPR036959">
    <property type="entry name" value="Peptidase_C12_UCH_sf"/>
</dbReference>
<dbReference type="InterPro" id="IPR041507">
    <property type="entry name" value="UCH_C"/>
</dbReference>
<dbReference type="PANTHER" id="PTHR10589">
    <property type="entry name" value="UBIQUITIN CARBOXYL-TERMINAL HYDROLASE"/>
    <property type="match status" value="1"/>
</dbReference>
<dbReference type="PANTHER" id="PTHR10589:SF28">
    <property type="entry name" value="UBIQUITIN CARBOXYL-TERMINAL HYDROLASE BAP1"/>
    <property type="match status" value="1"/>
</dbReference>
<dbReference type="Pfam" id="PF01088">
    <property type="entry name" value="Peptidase_C12"/>
    <property type="match status" value="1"/>
</dbReference>
<dbReference type="Pfam" id="PF18031">
    <property type="entry name" value="UCH_C"/>
    <property type="match status" value="1"/>
</dbReference>
<dbReference type="PRINTS" id="PR00707">
    <property type="entry name" value="UBCTHYDRLASE"/>
</dbReference>
<dbReference type="SUPFAM" id="SSF54001">
    <property type="entry name" value="Cysteine proteinases"/>
    <property type="match status" value="1"/>
</dbReference>
<dbReference type="PROSITE" id="PS52048">
    <property type="entry name" value="UCH_DOMAIN"/>
    <property type="match status" value="1"/>
</dbReference>
<dbReference type="PROSITE" id="PS52049">
    <property type="entry name" value="ULD"/>
    <property type="match status" value="1"/>
</dbReference>
<comment type="function">
    <text evidence="1">Deubiquitinating enzyme that plays a key role in chromatin by mediating deubiquitination of histone H2A and HCFC1. Catalytic component of the polycomb repressive deubiquitinase (PR-DUB) complex, a complex that specifically mediates deubiquitination of histone H2A monoubiquitinated at 'Lys-120' (H2AK119ub1). Does not deubiquitinate monoubiquitinated histone H2B. The PR-DUB complex is an epigenetic regulator of gene expression and acts as a transcriptional coactivator, affecting genes involved in development, cell communication, signaling, cell proliferation and cell viability. Antagonizes PRC1 mediated H2AK119ub1 monoubiquitination. As part of the PR-DUB complex, associates with chromatin enriched in histone marks H3K4me1, H3K4me3, and H3K27Ac, but not in H3K27me3. Acts as a regulator of cell growth by mediating deubiquitination of HCFC1 N-terminal and C-terminal chains, with some specificity toward 'Lys-48'-linked polyubiquitin chains compared to 'Lys-63'-linked polyubiquitin chains. Deubiquitination of HCFC1 does not lead to increase stability of HCFC1. Interferes with the BRCA1 and BARD1 heterodimer activity by inhibiting their ability to mediate ubiquitination and autoubiquitination. It however does not mediate deubiquitination of BRCA1 and BARD1. Able to mediate autodeubiquitination via intramolecular interactions to counteract monoubiquitination at the nuclear localization signal (NLS), thereby protecting it from cytoplasmic sequestration. Negatively regulates epithelial-mesenchymal transition (EMT) of trophoblast stem cells during placental development by regulating genes involved in epithelial cell integrity, cell adhesion and cytoskeletal organization.</text>
</comment>
<comment type="catalytic activity">
    <reaction evidence="1">
        <text>Thiol-dependent hydrolysis of ester, thioester, amide, peptide and isopeptide bonds formed by the C-terminal Gly of ubiquitin (a 76-residue protein attached to proteins as an intracellular targeting signal).</text>
        <dbReference type="EC" id="3.4.19.12"/>
    </reaction>
</comment>
<comment type="subunit">
    <text evidence="1">Core component of the polycomb repressive deubiquitinase (PR-DUB) complex, at least composed of BAP1, one of ASXL1, ASXL2 or (probably) ASXL3, and one of MBD5 or MBD6. The PR-DUB core associates with a number of accessory proteins, including FOXK1, FOXK2, KDM1B, HCFC1, YY1 and OGT; KDM1B specifically associates with ASXL2 PR-DUB complexes. The BAP1 deubiquitinase activity is not required for PR-DUB assembly. Homodimerizes (via coiled-coil hinge-region between the UCH and ULD domains) to mediate assembly of 2 copies of the BAP1-ASXL heterodimer into a bisymmetric tetramer; dimerization enhances association with nucleosomes. The PR-DUB complex associates with nucleosomes to mediate deubiquitination of 'lys-120' of histone H2AK118ub1 substrates; the association requires the positively charged C-terminal tail of BAP1. Interacts (via ULD domain) with ASXL1 (via DEUBAD domain); the interaction is direct and forms a ubiquitin binding cleft. The interaction with ASXL1 stabilizes BAP1 but is not required for nucleosome binding. Associates (via C-terminus) with nucleosome and chromatosome complexes through direct interaction with DNA and the histone3/4 dimer; this association displaces the histone-2A C-terminal tail, extending and orienting the H2AK118ub1 substrate towards the BAP1 deubiquitinase active site. Also interacts (via arginine finger) directly with the histone H2A-H2B acidic patch; this interaction is not critical for nucleosome-chromatosome association but may play a role in orienting the H2AK118ub1 substrate towards the PR-DUB complex active site. Interacts with BRCA1 (via the RING finger). Interacts (via HBM-like motif) with HCFC1. Interacts (via a C-terminal region overlapping the ULD domain) with YY1; the interaction is direct and requires the interaction with HCFC1. Interacts (when phosphorylated at Thr-475) with FOXK1. Interacts (when phosphorylated at Thr-475) with FOXK2; leading to recruitment of the PR-DUB complex and repression of FOXK2 target genes. Interacts (via non-classical PY-NLS) with TNPO1/transportin-1 (via HEAT repeats 8-12); the interaction is direct, mediates BAP1 nuclear localization and disrupts BAP1 homodimerization. Interacts (via C-terminus) with KPNA1/importin alpha5 and KPNA2/importin alpha1; these interactions can contribute to BAP1 nuclear localization but are less important than the interaction with TNPO1/transportin-1. The interaction with TNPO1/transportin-1 disrupts homodimerization and blocks ubiquitination by UBE2O.</text>
</comment>
<comment type="subcellular location">
    <subcellularLocation>
        <location evidence="1">Cytoplasm</location>
    </subcellularLocation>
    <subcellularLocation>
        <location evidence="1">Nucleus</location>
    </subcellularLocation>
    <subcellularLocation>
        <location evidence="1">Chromosome</location>
    </subcellularLocation>
    <text evidence="1 2">Mainly nuclear. Binds to chromatin. Localizes to the cytoplasm when monoubiquitinated by the E2/E3 hybrid ubiquitin-protein ligase UBE2O (By similarity). Recruitment to chromatin is dependent on ASXL1/2/3 and recruitment to specific genes on FOXK1/2 (By similarity). Nuclear localization is redundantly mediated by the importin and transportin systems; TNPO1/transportin-1 is the major mediator of nuclear localization (By similarity).</text>
</comment>
<comment type="domain">
    <text evidence="1">Possesses 2 overlapping nuclear localization sequences (NLS), a classic bipartite NLS and a non-classical PY-NLS. The classical NLS probably mediates import via the importin alpha/beta system while the PY-NLS mediates nuclear import via the transportin system.</text>
</comment>
<comment type="domain">
    <text evidence="1">The positively charged C-terminal tail stabilizes the interaction with nucleosomes/chromatosomes through interaction with the DNA backbone. Binding of ASXL1 just upstream of the positively charged C-terminal tail may stabilize its orientation to align the PR-DUB with its H2AK118ub1 substrate.</text>
</comment>
<comment type="domain">
    <text evidence="1">The ubiquitin C-terminal hydrolase (UCH) domain, together with the DEUBAD domain of ASXL1, forms the ubiquitin binding cleft of the PR-DUB complex.</text>
</comment>
<comment type="domain">
    <text evidence="1">The positively charged Arg-finger motif mediates interaction with the histone H2A-H2B acidic patch; this interaction is critical for nucleosomal H2AK119ub1 deubiquitination activity but not nucleosomal binding.</text>
</comment>
<comment type="PTM">
    <text evidence="1">Ubiquitinated: monoubiquitinated at multiple sites within its nuclear localization signal (NLS) BY UBE2O, leading to cytoplasmic retention. Able to mediate autodeubiquitination via intramolecular interactions to counteract cytoplasmic retention. Monoubiquitinated on at least 4 sites near or within its PY-NLS.</text>
</comment>
<comment type="similarity">
    <text evidence="7">Belongs to the peptidase C12 family. BAP1 subfamily.</text>
</comment>
<gene>
    <name type="primary">BAP1</name>
</gene>
<feature type="chain" id="PRO_0000395816" description="Ubiquitin carboxyl-terminal hydrolase BAP1">
    <location>
        <begin position="1"/>
        <end position="711"/>
    </location>
</feature>
<feature type="domain" description="UCH catalytic" evidence="4">
    <location>
        <begin position="4"/>
        <end position="234"/>
    </location>
</feature>
<feature type="domain" description="ULD" evidence="5">
    <location>
        <begin position="652"/>
        <end position="680"/>
    </location>
</feature>
<feature type="region of interest" description="Disordered" evidence="6">
    <location>
        <begin position="255"/>
        <end position="337"/>
    </location>
</feature>
<feature type="region of interest" description="Disordered" evidence="6">
    <location>
        <begin position="354"/>
        <end position="420"/>
    </location>
</feature>
<feature type="region of interest" description="Disordered" evidence="6">
    <location>
        <begin position="446"/>
        <end position="506"/>
    </location>
</feature>
<feature type="region of interest" description="Disordered" evidence="6">
    <location>
        <begin position="557"/>
        <end position="605"/>
    </location>
</feature>
<feature type="region of interest" description="Interaction with BRCA1" evidence="1">
    <location>
        <begin position="578"/>
        <end position="703"/>
    </location>
</feature>
<feature type="region of interest" description="Interaction with YY1" evidence="1">
    <location>
        <begin position="624"/>
        <end position="668"/>
    </location>
</feature>
<feature type="region of interest" description="Interaction with nucleosomal DNA forming a DNA clamp with ASXL1" evidence="1">
    <location>
        <begin position="681"/>
        <end position="683"/>
    </location>
</feature>
<feature type="region of interest" description="Disordered" evidence="6">
    <location>
        <begin position="685"/>
        <end position="711"/>
    </location>
</feature>
<feature type="region of interest" description="Positively charged C-terminal extension (CTE)" evidence="1">
    <location>
        <begin position="695"/>
        <end position="711"/>
    </location>
</feature>
<feature type="coiled-coil region" evidence="3">
    <location>
        <begin position="612"/>
        <end position="643"/>
    </location>
</feature>
<feature type="short sequence motif" description="Arg-finger motif" evidence="1">
    <location>
        <begin position="56"/>
        <end position="60"/>
    </location>
</feature>
<feature type="short sequence motif" description="HBM-like motif" evidence="1">
    <location>
        <begin position="345"/>
        <end position="348"/>
    </location>
</feature>
<feature type="short sequence motif" description="Classical bipartite Nuclear localization signal (NLS)" evidence="1">
    <location>
        <begin position="681"/>
        <end position="704"/>
    </location>
</feature>
<feature type="short sequence motif" description="Non-classical PY-nuclear localization signal (PY-NLS)" evidence="1">
    <location>
        <begin position="699"/>
        <end position="706"/>
    </location>
</feature>
<feature type="short sequence motif" description="Nuclear localization signal" evidence="1">
    <location>
        <begin position="699"/>
        <end position="704"/>
    </location>
</feature>
<feature type="compositionally biased region" description="Low complexity" evidence="6">
    <location>
        <begin position="269"/>
        <end position="278"/>
    </location>
</feature>
<feature type="compositionally biased region" description="Acidic residues" evidence="6">
    <location>
        <begin position="377"/>
        <end position="391"/>
    </location>
</feature>
<feature type="compositionally biased region" description="Polar residues" evidence="6">
    <location>
        <begin position="462"/>
        <end position="506"/>
    </location>
</feature>
<feature type="compositionally biased region" description="Low complexity" evidence="6">
    <location>
        <begin position="563"/>
        <end position="579"/>
    </location>
</feature>
<feature type="compositionally biased region" description="Basic and acidic residues" evidence="6">
    <location>
        <begin position="580"/>
        <end position="596"/>
    </location>
</feature>
<feature type="active site" description="Nucleophile" evidence="4">
    <location>
        <position position="91"/>
    </location>
</feature>
<feature type="active site" description="Proton donor" evidence="4">
    <location>
        <position position="169"/>
    </location>
</feature>
<feature type="site" description="Transition state stabilizer" evidence="4">
    <location>
        <position position="85"/>
    </location>
</feature>
<feature type="site" description="Important for enzyme activity" evidence="4">
    <location>
        <position position="184"/>
    </location>
</feature>
<feature type="modified residue" description="Phosphoserine" evidence="1">
    <location>
        <position position="274"/>
    </location>
</feature>
<feature type="modified residue" description="Phosphoserine" evidence="1">
    <location>
        <position position="351"/>
    </location>
</feature>
<feature type="modified residue" description="Phosphoserine" evidence="2">
    <location>
        <position position="377"/>
    </location>
</feature>
<feature type="modified residue" description="Phosphothreonine" evidence="1">
    <location>
        <position position="475"/>
    </location>
</feature>
<feature type="modified residue" description="Phosphoserine" evidence="1">
    <location>
        <position position="503"/>
    </location>
</feature>
<feature type="modified residue" description="Phosphoserine" evidence="1">
    <location>
        <position position="519"/>
    </location>
</feature>
<feature type="modified residue" description="Phosphoserine" evidence="1">
    <location>
        <position position="567"/>
    </location>
</feature>
<feature type="modified residue" description="Phosphoserine" evidence="1">
    <location>
        <position position="579"/>
    </location>
</feature>